<proteinExistence type="inferred from homology"/>
<comment type="subcellular location">
    <subcellularLocation>
        <location evidence="2">Mitochondrion</location>
    </subcellularLocation>
</comment>
<comment type="similarity">
    <text evidence="2">Belongs to the PPR family. P subfamily.</text>
</comment>
<comment type="online information" name="Pentatricopeptide repeat proteins">
    <link uri="https://ppr.plantenergy.uwa.edu.au"/>
</comment>
<accession>O81028</accession>
<keyword id="KW-0496">Mitochondrion</keyword>
<keyword id="KW-1185">Reference proteome</keyword>
<keyword id="KW-0677">Repeat</keyword>
<keyword id="KW-0809">Transit peptide</keyword>
<evidence type="ECO:0000255" key="1"/>
<evidence type="ECO:0000305" key="2"/>
<sequence>MRFSPTFFLLSQLRLTRRRAATSSRFYAVSALNNPNNLSDSEQQQVNHLNLSKLTQHGLQRLLNSTRDDPNLALSFLRQLKEHGVSPNVNAYATLVRILTTWGLDIKLDSVLVELIKNEERGFTVMDLIEVIGEQAEEKKRSFVLIRVSGALVKAYVSLGMFDEATDVLFQSKRLDCVVDIKACNFLMNRMTEFGKIGMLMTLFKQLKQLGLCANEYTYAIVVKALCRKGNLEEAAMLLIENESVFGYKTFINGLCVTGETEKAVALILELIDRKYLAGDDLRAVLGMVVRGFCNEMKMKAAESVIIEMEEIGFGLDVYACLAVIDRYCKNMNLPEALGFLDKMLGKGLKVNCVIVSLILQCYCKMDMCLEALEKFKEFRDMNIFLDRVCYNVAFDALSKLGRVEEAFELLQEMKDRGIVPDVINYTTLIDGYCLQGKVVDALDLIDEMIGNGMSPDLITYNVLVSGLARNGHEEEVLEIYERMKAEGPKPNAVTNSVIIEGLCFARKVKEAEDFFSSLEQKCPENKASFVKGYCEAGLSKKAYKAFVRLEYPLRKSVYIKLFFSLCIEGYLEKAHDVLKKMSAYRVEPGRSMCGKMIGAFCKLNNVREAQVLFDTMVERGLIPDLFTYTIMIHTYCRLNELQKAESLFEDMKQRGIKPDVVTYTVLLDRYLKLDPEHHETCSVQGEVGKRKASEVLREFSAAGIGLDVVCYTVLIDRQCKMNNLEQAAELFDRMIDSGLEPDMVAYTTLISSYFRKGYIDMAVTLVTELSKKYNIPSESFEAAVKSAALKAKRFQYGE</sequence>
<name>PP171_ARATH</name>
<feature type="transit peptide" description="Mitochondrion" evidence="1">
    <location>
        <begin position="1"/>
        <end position="27"/>
    </location>
</feature>
<feature type="chain" id="PRO_0000356030" description="Pentatricopeptide repeat-containing protein At2g26790, mitochondrial">
    <location>
        <begin position="28"/>
        <end position="799"/>
    </location>
</feature>
<feature type="repeat" description="PPR 1">
    <location>
        <begin position="145"/>
        <end position="179"/>
    </location>
</feature>
<feature type="repeat" description="PPR 2">
    <location>
        <begin position="180"/>
        <end position="214"/>
    </location>
</feature>
<feature type="repeat" description="PPR 3">
    <location>
        <begin position="215"/>
        <end position="250"/>
    </location>
</feature>
<feature type="repeat" description="PPR 4">
    <location>
        <begin position="251"/>
        <end position="278"/>
    </location>
</feature>
<feature type="repeat" description="PPR 5">
    <location>
        <begin position="282"/>
        <end position="316"/>
    </location>
</feature>
<feature type="repeat" description="PPR 6">
    <location>
        <begin position="317"/>
        <end position="351"/>
    </location>
</feature>
<feature type="repeat" description="PPR 7">
    <location>
        <begin position="352"/>
        <end position="386"/>
    </location>
</feature>
<feature type="repeat" description="PPR 8">
    <location>
        <begin position="387"/>
        <end position="421"/>
    </location>
</feature>
<feature type="repeat" description="PPR 9">
    <location>
        <begin position="422"/>
        <end position="456"/>
    </location>
</feature>
<feature type="repeat" description="PPR 10">
    <location>
        <begin position="457"/>
        <end position="491"/>
    </location>
</feature>
<feature type="repeat" description="PPR 11">
    <location>
        <begin position="492"/>
        <end position="522"/>
    </location>
</feature>
<feature type="repeat" description="PPR 12">
    <location>
        <begin position="523"/>
        <end position="553"/>
    </location>
</feature>
<feature type="repeat" description="PPR 13">
    <location>
        <begin position="555"/>
        <end position="589"/>
    </location>
</feature>
<feature type="repeat" description="PPR 14">
    <location>
        <begin position="590"/>
        <end position="624"/>
    </location>
</feature>
<feature type="repeat" description="PPR 15">
    <location>
        <begin position="625"/>
        <end position="659"/>
    </location>
</feature>
<feature type="repeat" description="PPR 16">
    <location>
        <begin position="660"/>
        <end position="695"/>
    </location>
</feature>
<feature type="repeat" description="PPR 17">
    <location>
        <begin position="708"/>
        <end position="742"/>
    </location>
</feature>
<feature type="repeat" description="PPR 18">
    <location>
        <begin position="743"/>
        <end position="777"/>
    </location>
</feature>
<protein>
    <recommendedName>
        <fullName>Pentatricopeptide repeat-containing protein At2g26790, mitochondrial</fullName>
    </recommendedName>
</protein>
<organism>
    <name type="scientific">Arabidopsis thaliana</name>
    <name type="common">Mouse-ear cress</name>
    <dbReference type="NCBI Taxonomy" id="3702"/>
    <lineage>
        <taxon>Eukaryota</taxon>
        <taxon>Viridiplantae</taxon>
        <taxon>Streptophyta</taxon>
        <taxon>Embryophyta</taxon>
        <taxon>Tracheophyta</taxon>
        <taxon>Spermatophyta</taxon>
        <taxon>Magnoliopsida</taxon>
        <taxon>eudicotyledons</taxon>
        <taxon>Gunneridae</taxon>
        <taxon>Pentapetalae</taxon>
        <taxon>rosids</taxon>
        <taxon>malvids</taxon>
        <taxon>Brassicales</taxon>
        <taxon>Brassicaceae</taxon>
        <taxon>Camelineae</taxon>
        <taxon>Arabidopsis</taxon>
    </lineage>
</organism>
<gene>
    <name type="ordered locus">At2g26790</name>
    <name type="ORF">F12C20.17</name>
</gene>
<reference key="1">
    <citation type="journal article" date="1999" name="Nature">
        <title>Sequence and analysis of chromosome 2 of the plant Arabidopsis thaliana.</title>
        <authorList>
            <person name="Lin X."/>
            <person name="Kaul S."/>
            <person name="Rounsley S.D."/>
            <person name="Shea T.P."/>
            <person name="Benito M.-I."/>
            <person name="Town C.D."/>
            <person name="Fujii C.Y."/>
            <person name="Mason T.M."/>
            <person name="Bowman C.L."/>
            <person name="Barnstead M.E."/>
            <person name="Feldblyum T.V."/>
            <person name="Buell C.R."/>
            <person name="Ketchum K.A."/>
            <person name="Lee J.J."/>
            <person name="Ronning C.M."/>
            <person name="Koo H.L."/>
            <person name="Moffat K.S."/>
            <person name="Cronin L.A."/>
            <person name="Shen M."/>
            <person name="Pai G."/>
            <person name="Van Aken S."/>
            <person name="Umayam L."/>
            <person name="Tallon L.J."/>
            <person name="Gill J.E."/>
            <person name="Adams M.D."/>
            <person name="Carrera A.J."/>
            <person name="Creasy T.H."/>
            <person name="Goodman H.M."/>
            <person name="Somerville C.R."/>
            <person name="Copenhaver G.P."/>
            <person name="Preuss D."/>
            <person name="Nierman W.C."/>
            <person name="White O."/>
            <person name="Eisen J.A."/>
            <person name="Salzberg S.L."/>
            <person name="Fraser C.M."/>
            <person name="Venter J.C."/>
        </authorList>
    </citation>
    <scope>NUCLEOTIDE SEQUENCE [LARGE SCALE GENOMIC DNA]</scope>
    <source>
        <strain>cv. Columbia</strain>
    </source>
</reference>
<reference key="2">
    <citation type="journal article" date="2017" name="Plant J.">
        <title>Araport11: a complete reannotation of the Arabidopsis thaliana reference genome.</title>
        <authorList>
            <person name="Cheng C.Y."/>
            <person name="Krishnakumar V."/>
            <person name="Chan A.P."/>
            <person name="Thibaud-Nissen F."/>
            <person name="Schobel S."/>
            <person name="Town C.D."/>
        </authorList>
    </citation>
    <scope>GENOME REANNOTATION</scope>
    <source>
        <strain>cv. Columbia</strain>
    </source>
</reference>
<reference key="3">
    <citation type="journal article" date="2004" name="Plant Cell">
        <title>Genome-wide analysis of Arabidopsis pentatricopeptide repeat proteins reveals their essential role in organelle biogenesis.</title>
        <authorList>
            <person name="Lurin C."/>
            <person name="Andres C."/>
            <person name="Aubourg S."/>
            <person name="Bellaoui M."/>
            <person name="Bitton F."/>
            <person name="Bruyere C."/>
            <person name="Caboche M."/>
            <person name="Debast C."/>
            <person name="Gualberto J."/>
            <person name="Hoffmann B."/>
            <person name="Lecharny A."/>
            <person name="Le Ret M."/>
            <person name="Martin-Magniette M.-L."/>
            <person name="Mireau H."/>
            <person name="Peeters N."/>
            <person name="Renou J.-P."/>
            <person name="Szurek B."/>
            <person name="Taconnat L."/>
            <person name="Small I."/>
        </authorList>
    </citation>
    <scope>GENE FAMILY</scope>
</reference>
<dbReference type="EMBL" id="AC005168">
    <property type="protein sequence ID" value="AAC32245.1"/>
    <property type="molecule type" value="Genomic_DNA"/>
</dbReference>
<dbReference type="EMBL" id="CP002685">
    <property type="protein sequence ID" value="AEC07887.1"/>
    <property type="molecule type" value="Genomic_DNA"/>
</dbReference>
<dbReference type="EMBL" id="CP002685">
    <property type="protein sequence ID" value="ANM62342.1"/>
    <property type="molecule type" value="Genomic_DNA"/>
</dbReference>
<dbReference type="PIR" id="T02656">
    <property type="entry name" value="T02656"/>
</dbReference>
<dbReference type="RefSeq" id="NP_001318293.1">
    <property type="nucleotide sequence ID" value="NM_001336084.1"/>
</dbReference>
<dbReference type="RefSeq" id="NP_180247.1">
    <property type="nucleotide sequence ID" value="NM_128236.2"/>
</dbReference>
<dbReference type="SMR" id="O81028"/>
<dbReference type="FunCoup" id="O81028">
    <property type="interactions" value="307"/>
</dbReference>
<dbReference type="STRING" id="3702.O81028"/>
<dbReference type="iPTMnet" id="O81028"/>
<dbReference type="PaxDb" id="3702-AT2G26790.1"/>
<dbReference type="EnsemblPlants" id="AT2G26790.1">
    <property type="protein sequence ID" value="AT2G26790.1"/>
    <property type="gene ID" value="AT2G26790"/>
</dbReference>
<dbReference type="EnsemblPlants" id="AT2G26790.2">
    <property type="protein sequence ID" value="AT2G26790.2"/>
    <property type="gene ID" value="AT2G26790"/>
</dbReference>
<dbReference type="GeneID" id="817220"/>
<dbReference type="Gramene" id="AT2G26790.1">
    <property type="protein sequence ID" value="AT2G26790.1"/>
    <property type="gene ID" value="AT2G26790"/>
</dbReference>
<dbReference type="Gramene" id="AT2G26790.2">
    <property type="protein sequence ID" value="AT2G26790.2"/>
    <property type="gene ID" value="AT2G26790"/>
</dbReference>
<dbReference type="KEGG" id="ath:AT2G26790"/>
<dbReference type="Araport" id="AT2G26790"/>
<dbReference type="TAIR" id="AT2G26790"/>
<dbReference type="eggNOG" id="KOG4197">
    <property type="taxonomic scope" value="Eukaryota"/>
</dbReference>
<dbReference type="HOGENOM" id="CLU_002706_49_9_1"/>
<dbReference type="InParanoid" id="O81028"/>
<dbReference type="OMA" id="AYTIMIT"/>
<dbReference type="PhylomeDB" id="O81028"/>
<dbReference type="PRO" id="PR:O81028"/>
<dbReference type="Proteomes" id="UP000006548">
    <property type="component" value="Chromosome 2"/>
</dbReference>
<dbReference type="ExpressionAtlas" id="O81028">
    <property type="expression patterns" value="baseline and differential"/>
</dbReference>
<dbReference type="GO" id="GO:0005739">
    <property type="term" value="C:mitochondrion"/>
    <property type="evidence" value="ECO:0007669"/>
    <property type="project" value="UniProtKB-SubCell"/>
</dbReference>
<dbReference type="Gene3D" id="1.25.40.10">
    <property type="entry name" value="Tetratricopeptide repeat domain"/>
    <property type="match status" value="6"/>
</dbReference>
<dbReference type="InterPro" id="IPR002885">
    <property type="entry name" value="Pentatricopeptide_rpt"/>
</dbReference>
<dbReference type="InterPro" id="IPR011990">
    <property type="entry name" value="TPR-like_helical_dom_sf"/>
</dbReference>
<dbReference type="NCBIfam" id="TIGR00756">
    <property type="entry name" value="PPR"/>
    <property type="match status" value="7"/>
</dbReference>
<dbReference type="PANTHER" id="PTHR47936:SF1">
    <property type="entry name" value="PENTATRICOPEPTIDE REPEAT-CONTAINING PROTEIN GUN1, CHLOROPLASTIC"/>
    <property type="match status" value="1"/>
</dbReference>
<dbReference type="PANTHER" id="PTHR47936">
    <property type="entry name" value="PPR_LONG DOMAIN-CONTAINING PROTEIN"/>
    <property type="match status" value="1"/>
</dbReference>
<dbReference type="Pfam" id="PF01535">
    <property type="entry name" value="PPR"/>
    <property type="match status" value="9"/>
</dbReference>
<dbReference type="Pfam" id="PF12854">
    <property type="entry name" value="PPR_1"/>
    <property type="match status" value="1"/>
</dbReference>
<dbReference type="Pfam" id="PF13041">
    <property type="entry name" value="PPR_2"/>
    <property type="match status" value="3"/>
</dbReference>
<dbReference type="PROSITE" id="PS51375">
    <property type="entry name" value="PPR"/>
    <property type="match status" value="17"/>
</dbReference>